<proteinExistence type="evidence at transcript level"/>
<accession>Q0KIY5</accession>
<feature type="chain" id="PRO_0000261580" description="Myoglobin">
    <location>
        <begin position="1"/>
        <end position="154"/>
    </location>
</feature>
<feature type="domain" description="Globin" evidence="7">
    <location>
        <begin position="2"/>
        <end position="148"/>
    </location>
</feature>
<feature type="binding site" evidence="5">
    <location>
        <position position="65"/>
    </location>
    <ligand>
        <name>nitrite</name>
        <dbReference type="ChEBI" id="CHEBI:16301"/>
    </ligand>
</feature>
<feature type="binding site" evidence="3 7">
    <location>
        <position position="65"/>
    </location>
    <ligand>
        <name>O2</name>
        <dbReference type="ChEBI" id="CHEBI:15379"/>
    </ligand>
</feature>
<feature type="binding site" description="proximal binding residue" evidence="1">
    <location>
        <position position="94"/>
    </location>
    <ligand>
        <name>heme b</name>
        <dbReference type="ChEBI" id="CHEBI:60344"/>
    </ligand>
    <ligandPart>
        <name>Fe</name>
        <dbReference type="ChEBI" id="CHEBI:18248"/>
    </ligandPart>
</feature>
<feature type="modified residue" description="Phosphoserine" evidence="6">
    <location>
        <position position="4"/>
    </location>
</feature>
<feature type="modified residue" description="Phosphothreonine" evidence="4">
    <location>
        <position position="68"/>
    </location>
</feature>
<comment type="function">
    <text evidence="1">Monomeric heme protein which primary function is to store oxygen and facilitate its diffusion within muscle tissues. Reversibly binds oxygen through a pentacoordinated heme iron and enables its timely and efficient release as needed during periods of heightened demand. Depending on the oxidative conditions of tissues and cells, and in addition to its ability to bind oxygen, it also has a nitrite reductase activity whereby it regulates the production of bioactive nitric oxide. Under stress conditions, like hypoxia and anoxia, it also protects cells against reactive oxygen species thanks to its pseudoperoxidase activity.</text>
</comment>
<comment type="catalytic activity">
    <reaction evidence="1">
        <text>Fe(III)-heme b-[protein] + nitric oxide + H2O = Fe(II)-heme b-[protein] + nitrite + 2 H(+)</text>
        <dbReference type="Rhea" id="RHEA:77711"/>
        <dbReference type="Rhea" id="RHEA-COMP:18975"/>
        <dbReference type="Rhea" id="RHEA-COMP:18976"/>
        <dbReference type="ChEBI" id="CHEBI:15377"/>
        <dbReference type="ChEBI" id="CHEBI:15378"/>
        <dbReference type="ChEBI" id="CHEBI:16301"/>
        <dbReference type="ChEBI" id="CHEBI:16480"/>
        <dbReference type="ChEBI" id="CHEBI:55376"/>
        <dbReference type="ChEBI" id="CHEBI:60344"/>
    </reaction>
    <physiologicalReaction direction="right-to-left" evidence="1">
        <dbReference type="Rhea" id="RHEA:77713"/>
    </physiologicalReaction>
</comment>
<comment type="catalytic activity">
    <reaction evidence="1">
        <text>H2O2 + AH2 = A + 2 H2O</text>
        <dbReference type="Rhea" id="RHEA:30275"/>
        <dbReference type="ChEBI" id="CHEBI:13193"/>
        <dbReference type="ChEBI" id="CHEBI:15377"/>
        <dbReference type="ChEBI" id="CHEBI:16240"/>
        <dbReference type="ChEBI" id="CHEBI:17499"/>
    </reaction>
</comment>
<comment type="subunit">
    <text evidence="2">Monomeric.</text>
</comment>
<comment type="subcellular location">
    <subcellularLocation>
        <location evidence="1">Cytoplasm</location>
        <location evidence="1">Sarcoplasm</location>
    </subcellularLocation>
</comment>
<comment type="similarity">
    <text evidence="7">Belongs to the globin family.</text>
</comment>
<reference key="1">
    <citation type="journal article" date="2006" name="Comp. Biochem. Physiol.">
        <title>cDNA-derived amino acid sequences of myoglobins from nine species of whales and dolphins.</title>
        <authorList>
            <person name="Iwanami K."/>
            <person name="Mita H."/>
            <person name="Yamamoto Y."/>
            <person name="Fujise Y."/>
            <person name="Yamada T."/>
            <person name="Suzuki T."/>
        </authorList>
    </citation>
    <scope>NUCLEOTIDE SEQUENCE [MRNA]</scope>
</reference>
<dbReference type="EC" id="1.7.-.-" evidence="1"/>
<dbReference type="EC" id="1.11.1.-" evidence="1"/>
<dbReference type="EMBL" id="AB271147">
    <property type="protein sequence ID" value="BAF03582.1"/>
    <property type="molecule type" value="mRNA"/>
</dbReference>
<dbReference type="BMRB" id="Q0KIY5"/>
<dbReference type="SMR" id="Q0KIY5"/>
<dbReference type="GO" id="GO:0070062">
    <property type="term" value="C:extracellular exosome"/>
    <property type="evidence" value="ECO:0007669"/>
    <property type="project" value="TreeGrafter"/>
</dbReference>
<dbReference type="GO" id="GO:0016528">
    <property type="term" value="C:sarcoplasm"/>
    <property type="evidence" value="ECO:0000250"/>
    <property type="project" value="UniProtKB"/>
</dbReference>
<dbReference type="GO" id="GO:0020037">
    <property type="term" value="F:heme binding"/>
    <property type="evidence" value="ECO:0007669"/>
    <property type="project" value="InterPro"/>
</dbReference>
<dbReference type="GO" id="GO:0046872">
    <property type="term" value="F:metal ion binding"/>
    <property type="evidence" value="ECO:0007669"/>
    <property type="project" value="UniProtKB-KW"/>
</dbReference>
<dbReference type="GO" id="GO:0098809">
    <property type="term" value="F:nitrite reductase activity"/>
    <property type="evidence" value="ECO:0000250"/>
    <property type="project" value="UniProtKB"/>
</dbReference>
<dbReference type="GO" id="GO:0019825">
    <property type="term" value="F:oxygen binding"/>
    <property type="evidence" value="ECO:0007669"/>
    <property type="project" value="InterPro"/>
</dbReference>
<dbReference type="GO" id="GO:0005344">
    <property type="term" value="F:oxygen carrier activity"/>
    <property type="evidence" value="ECO:0000250"/>
    <property type="project" value="UniProtKB"/>
</dbReference>
<dbReference type="GO" id="GO:0004601">
    <property type="term" value="F:peroxidase activity"/>
    <property type="evidence" value="ECO:0000250"/>
    <property type="project" value="UniProtKB"/>
</dbReference>
<dbReference type="GO" id="GO:0019430">
    <property type="term" value="P:removal of superoxide radicals"/>
    <property type="evidence" value="ECO:0000250"/>
    <property type="project" value="UniProtKB"/>
</dbReference>
<dbReference type="Gene3D" id="6.10.140.2100">
    <property type="match status" value="1"/>
</dbReference>
<dbReference type="Gene3D" id="6.10.140.2110">
    <property type="match status" value="1"/>
</dbReference>
<dbReference type="InterPro" id="IPR000971">
    <property type="entry name" value="Globin"/>
</dbReference>
<dbReference type="InterPro" id="IPR009050">
    <property type="entry name" value="Globin-like_sf"/>
</dbReference>
<dbReference type="InterPro" id="IPR002335">
    <property type="entry name" value="Myoglobin"/>
</dbReference>
<dbReference type="PANTHER" id="PTHR47132">
    <property type="entry name" value="MYOGLOBIN"/>
    <property type="match status" value="1"/>
</dbReference>
<dbReference type="PANTHER" id="PTHR47132:SF1">
    <property type="entry name" value="MYOGLOBIN"/>
    <property type="match status" value="1"/>
</dbReference>
<dbReference type="Pfam" id="PF00042">
    <property type="entry name" value="Globin"/>
    <property type="match status" value="1"/>
</dbReference>
<dbReference type="PRINTS" id="PR00613">
    <property type="entry name" value="MYOGLOBIN"/>
</dbReference>
<dbReference type="SUPFAM" id="SSF46458">
    <property type="entry name" value="Globin-like"/>
    <property type="match status" value="1"/>
</dbReference>
<dbReference type="PROSITE" id="PS01033">
    <property type="entry name" value="GLOBIN"/>
    <property type="match status" value="1"/>
</dbReference>
<organism>
    <name type="scientific">Kogia breviceps</name>
    <name type="common">Pygmy sperm whale</name>
    <name type="synonym">Physeter breviceps</name>
    <dbReference type="NCBI Taxonomy" id="27615"/>
    <lineage>
        <taxon>Eukaryota</taxon>
        <taxon>Metazoa</taxon>
        <taxon>Chordata</taxon>
        <taxon>Craniata</taxon>
        <taxon>Vertebrata</taxon>
        <taxon>Euteleostomi</taxon>
        <taxon>Mammalia</taxon>
        <taxon>Eutheria</taxon>
        <taxon>Laurasiatheria</taxon>
        <taxon>Artiodactyla</taxon>
        <taxon>Whippomorpha</taxon>
        <taxon>Cetacea</taxon>
        <taxon>Odontoceti</taxon>
        <taxon>Physeteridae</taxon>
        <taxon>Kogia</taxon>
    </lineage>
</organism>
<protein>
    <recommendedName>
        <fullName>Myoglobin</fullName>
    </recommendedName>
    <alternativeName>
        <fullName evidence="1">Nitrite reductase MB</fullName>
        <ecNumber evidence="1">1.7.-.-</ecNumber>
    </alternativeName>
    <alternativeName>
        <fullName evidence="1">Pseudoperoxidase MB</fullName>
        <ecNumber evidence="1">1.11.1.-</ecNumber>
    </alternativeName>
</protein>
<keyword id="KW-0963">Cytoplasm</keyword>
<keyword id="KW-0349">Heme</keyword>
<keyword id="KW-0408">Iron</keyword>
<keyword id="KW-0479">Metal-binding</keyword>
<keyword id="KW-0514">Muscle protein</keyword>
<keyword id="KW-0560">Oxidoreductase</keyword>
<keyword id="KW-0561">Oxygen transport</keyword>
<keyword id="KW-0597">Phosphoprotein</keyword>
<keyword id="KW-0813">Transport</keyword>
<evidence type="ECO:0000250" key="1">
    <source>
        <dbReference type="UniProtKB" id="P02144"/>
    </source>
</evidence>
<evidence type="ECO:0000250" key="2">
    <source>
        <dbReference type="UniProtKB" id="P02185"/>
    </source>
</evidence>
<evidence type="ECO:0000250" key="3">
    <source>
        <dbReference type="UniProtKB" id="P02189"/>
    </source>
</evidence>
<evidence type="ECO:0000250" key="4">
    <source>
        <dbReference type="UniProtKB" id="P04247"/>
    </source>
</evidence>
<evidence type="ECO:0000250" key="5">
    <source>
        <dbReference type="UniProtKB" id="P68082"/>
    </source>
</evidence>
<evidence type="ECO:0000250" key="6">
    <source>
        <dbReference type="UniProtKB" id="Q9QZ76"/>
    </source>
</evidence>
<evidence type="ECO:0000255" key="7">
    <source>
        <dbReference type="PROSITE-ProRule" id="PRU00238"/>
    </source>
</evidence>
<gene>
    <name type="primary">MB</name>
</gene>
<name>MYG_KOGBR</name>
<sequence>MVLSEGEWQLVLHVWAKVEADIAGHGQDILIRLFKHHPETLEKFDRFKHLKSEAEMKASEDLKKHGVTVLTALGAILKKKGHHEAELKPLAQSHATKHKIPIKYLEFISEAIIHVLHSRHPADFGADAQGAMSKALELFRKDIAAKYKELGYQG</sequence>